<reference key="1">
    <citation type="journal article" date="2006" name="Oncogene">
        <title>The human homologue of the RNA polymerase II-associated factor 1 (hPaf1), localized on the 19q13 amplicon, is associated with tumorigenesis.</title>
        <authorList>
            <person name="Moniaux N."/>
            <person name="Nemos C."/>
            <person name="Schmied B.M."/>
            <person name="Chauhan S.C."/>
            <person name="Deb S."/>
            <person name="Morikane K."/>
            <person name="Choudhury A."/>
            <person name="Vanlith M."/>
            <person name="Sutherlin M."/>
            <person name="Sikela J.M."/>
            <person name="Hollingsworth M.A."/>
            <person name="Batra S.K."/>
        </authorList>
    </citation>
    <scope>NUCLEOTIDE SEQUENCE [MRNA] (ISOFORM 1)</scope>
    <scope>SUBCELLULAR LOCATION</scope>
    <scope>INTERACTION WITH POLR2A</scope>
    <scope>FUNCTION</scope>
    <source>
        <tissue>Fetal pancreas</tissue>
    </source>
</reference>
<reference key="2">
    <citation type="journal article" date="2004" name="Nat. Genet.">
        <title>Complete sequencing and characterization of 21,243 full-length human cDNAs.</title>
        <authorList>
            <person name="Ota T."/>
            <person name="Suzuki Y."/>
            <person name="Nishikawa T."/>
            <person name="Otsuki T."/>
            <person name="Sugiyama T."/>
            <person name="Irie R."/>
            <person name="Wakamatsu A."/>
            <person name="Hayashi K."/>
            <person name="Sato H."/>
            <person name="Nagai K."/>
            <person name="Kimura K."/>
            <person name="Makita H."/>
            <person name="Sekine M."/>
            <person name="Obayashi M."/>
            <person name="Nishi T."/>
            <person name="Shibahara T."/>
            <person name="Tanaka T."/>
            <person name="Ishii S."/>
            <person name="Yamamoto J."/>
            <person name="Saito K."/>
            <person name="Kawai Y."/>
            <person name="Isono Y."/>
            <person name="Nakamura Y."/>
            <person name="Nagahari K."/>
            <person name="Murakami K."/>
            <person name="Yasuda T."/>
            <person name="Iwayanagi T."/>
            <person name="Wagatsuma M."/>
            <person name="Shiratori A."/>
            <person name="Sudo H."/>
            <person name="Hosoiri T."/>
            <person name="Kaku Y."/>
            <person name="Kodaira H."/>
            <person name="Kondo H."/>
            <person name="Sugawara M."/>
            <person name="Takahashi M."/>
            <person name="Kanda K."/>
            <person name="Yokoi T."/>
            <person name="Furuya T."/>
            <person name="Kikkawa E."/>
            <person name="Omura Y."/>
            <person name="Abe K."/>
            <person name="Kamihara K."/>
            <person name="Katsuta N."/>
            <person name="Sato K."/>
            <person name="Tanikawa M."/>
            <person name="Yamazaki M."/>
            <person name="Ninomiya K."/>
            <person name="Ishibashi T."/>
            <person name="Yamashita H."/>
            <person name="Murakawa K."/>
            <person name="Fujimori K."/>
            <person name="Tanai H."/>
            <person name="Kimata M."/>
            <person name="Watanabe M."/>
            <person name="Hiraoka S."/>
            <person name="Chiba Y."/>
            <person name="Ishida S."/>
            <person name="Ono Y."/>
            <person name="Takiguchi S."/>
            <person name="Watanabe S."/>
            <person name="Yosida M."/>
            <person name="Hotuta T."/>
            <person name="Kusano J."/>
            <person name="Kanehori K."/>
            <person name="Takahashi-Fujii A."/>
            <person name="Hara H."/>
            <person name="Tanase T.-O."/>
            <person name="Nomura Y."/>
            <person name="Togiya S."/>
            <person name="Komai F."/>
            <person name="Hara R."/>
            <person name="Takeuchi K."/>
            <person name="Arita M."/>
            <person name="Imose N."/>
            <person name="Musashino K."/>
            <person name="Yuuki H."/>
            <person name="Oshima A."/>
            <person name="Sasaki N."/>
            <person name="Aotsuka S."/>
            <person name="Yoshikawa Y."/>
            <person name="Matsunawa H."/>
            <person name="Ichihara T."/>
            <person name="Shiohata N."/>
            <person name="Sano S."/>
            <person name="Moriya S."/>
            <person name="Momiyama H."/>
            <person name="Satoh N."/>
            <person name="Takami S."/>
            <person name="Terashima Y."/>
            <person name="Suzuki O."/>
            <person name="Nakagawa S."/>
            <person name="Senoh A."/>
            <person name="Mizoguchi H."/>
            <person name="Goto Y."/>
            <person name="Shimizu F."/>
            <person name="Wakebe H."/>
            <person name="Hishigaki H."/>
            <person name="Watanabe T."/>
            <person name="Sugiyama A."/>
            <person name="Takemoto M."/>
            <person name="Kawakami B."/>
            <person name="Yamazaki M."/>
            <person name="Watanabe K."/>
            <person name="Kumagai A."/>
            <person name="Itakura S."/>
            <person name="Fukuzumi Y."/>
            <person name="Fujimori Y."/>
            <person name="Komiyama M."/>
            <person name="Tashiro H."/>
            <person name="Tanigami A."/>
            <person name="Fujiwara T."/>
            <person name="Ono T."/>
            <person name="Yamada K."/>
            <person name="Fujii Y."/>
            <person name="Ozaki K."/>
            <person name="Hirao M."/>
            <person name="Ohmori Y."/>
            <person name="Kawabata A."/>
            <person name="Hikiji T."/>
            <person name="Kobatake N."/>
            <person name="Inagaki H."/>
            <person name="Ikema Y."/>
            <person name="Okamoto S."/>
            <person name="Okitani R."/>
            <person name="Kawakami T."/>
            <person name="Noguchi S."/>
            <person name="Itoh T."/>
            <person name="Shigeta K."/>
            <person name="Senba T."/>
            <person name="Matsumura K."/>
            <person name="Nakajima Y."/>
            <person name="Mizuno T."/>
            <person name="Morinaga M."/>
            <person name="Sasaki M."/>
            <person name="Togashi T."/>
            <person name="Oyama M."/>
            <person name="Hata H."/>
            <person name="Watanabe M."/>
            <person name="Komatsu T."/>
            <person name="Mizushima-Sugano J."/>
            <person name="Satoh T."/>
            <person name="Shirai Y."/>
            <person name="Takahashi Y."/>
            <person name="Nakagawa K."/>
            <person name="Okumura K."/>
            <person name="Nagase T."/>
            <person name="Nomura N."/>
            <person name="Kikuchi H."/>
            <person name="Masuho Y."/>
            <person name="Yamashita R."/>
            <person name="Nakai K."/>
            <person name="Yada T."/>
            <person name="Nakamura Y."/>
            <person name="Ohara O."/>
            <person name="Isogai T."/>
            <person name="Sugano S."/>
        </authorList>
    </citation>
    <scope>NUCLEOTIDE SEQUENCE [LARGE SCALE MRNA] (ISOFORM 3)</scope>
    <source>
        <tissue>Placenta</tissue>
    </source>
</reference>
<reference key="3">
    <citation type="journal article" date="2004" name="Nature">
        <title>The DNA sequence and biology of human chromosome 19.</title>
        <authorList>
            <person name="Grimwood J."/>
            <person name="Gordon L.A."/>
            <person name="Olsen A.S."/>
            <person name="Terry A."/>
            <person name="Schmutz J."/>
            <person name="Lamerdin J.E."/>
            <person name="Hellsten U."/>
            <person name="Goodstein D."/>
            <person name="Couronne O."/>
            <person name="Tran-Gyamfi M."/>
            <person name="Aerts A."/>
            <person name="Altherr M."/>
            <person name="Ashworth L."/>
            <person name="Bajorek E."/>
            <person name="Black S."/>
            <person name="Branscomb E."/>
            <person name="Caenepeel S."/>
            <person name="Carrano A.V."/>
            <person name="Caoile C."/>
            <person name="Chan Y.M."/>
            <person name="Christensen M."/>
            <person name="Cleland C.A."/>
            <person name="Copeland A."/>
            <person name="Dalin E."/>
            <person name="Dehal P."/>
            <person name="Denys M."/>
            <person name="Detter J.C."/>
            <person name="Escobar J."/>
            <person name="Flowers D."/>
            <person name="Fotopulos D."/>
            <person name="Garcia C."/>
            <person name="Georgescu A.M."/>
            <person name="Glavina T."/>
            <person name="Gomez M."/>
            <person name="Gonzales E."/>
            <person name="Groza M."/>
            <person name="Hammon N."/>
            <person name="Hawkins T."/>
            <person name="Haydu L."/>
            <person name="Ho I."/>
            <person name="Huang W."/>
            <person name="Israni S."/>
            <person name="Jett J."/>
            <person name="Kadner K."/>
            <person name="Kimball H."/>
            <person name="Kobayashi A."/>
            <person name="Larionov V."/>
            <person name="Leem S.-H."/>
            <person name="Lopez F."/>
            <person name="Lou Y."/>
            <person name="Lowry S."/>
            <person name="Malfatti S."/>
            <person name="Martinez D."/>
            <person name="McCready P.M."/>
            <person name="Medina C."/>
            <person name="Morgan J."/>
            <person name="Nelson K."/>
            <person name="Nolan M."/>
            <person name="Ovcharenko I."/>
            <person name="Pitluck S."/>
            <person name="Pollard M."/>
            <person name="Popkie A.P."/>
            <person name="Predki P."/>
            <person name="Quan G."/>
            <person name="Ramirez L."/>
            <person name="Rash S."/>
            <person name="Retterer J."/>
            <person name="Rodriguez A."/>
            <person name="Rogers S."/>
            <person name="Salamov A."/>
            <person name="Salazar A."/>
            <person name="She X."/>
            <person name="Smith D."/>
            <person name="Slezak T."/>
            <person name="Solovyev V."/>
            <person name="Thayer N."/>
            <person name="Tice H."/>
            <person name="Tsai M."/>
            <person name="Ustaszewska A."/>
            <person name="Vo N."/>
            <person name="Wagner M."/>
            <person name="Wheeler J."/>
            <person name="Wu K."/>
            <person name="Xie G."/>
            <person name="Yang J."/>
            <person name="Dubchak I."/>
            <person name="Furey T.S."/>
            <person name="DeJong P."/>
            <person name="Dickson M."/>
            <person name="Gordon D."/>
            <person name="Eichler E.E."/>
            <person name="Pennacchio L.A."/>
            <person name="Richardson P."/>
            <person name="Stubbs L."/>
            <person name="Rokhsar D.S."/>
            <person name="Myers R.M."/>
            <person name="Rubin E.M."/>
            <person name="Lucas S.M."/>
        </authorList>
    </citation>
    <scope>NUCLEOTIDE SEQUENCE [LARGE SCALE GENOMIC DNA]</scope>
</reference>
<reference key="4">
    <citation type="submission" date="2005-07" db="EMBL/GenBank/DDBJ databases">
        <authorList>
            <person name="Mural R.J."/>
            <person name="Istrail S."/>
            <person name="Sutton G.G."/>
            <person name="Florea L."/>
            <person name="Halpern A.L."/>
            <person name="Mobarry C.M."/>
            <person name="Lippert R."/>
            <person name="Walenz B."/>
            <person name="Shatkay H."/>
            <person name="Dew I."/>
            <person name="Miller J.R."/>
            <person name="Flanigan M.J."/>
            <person name="Edwards N.J."/>
            <person name="Bolanos R."/>
            <person name="Fasulo D."/>
            <person name="Halldorsson B.V."/>
            <person name="Hannenhalli S."/>
            <person name="Turner R."/>
            <person name="Yooseph S."/>
            <person name="Lu F."/>
            <person name="Nusskern D.R."/>
            <person name="Shue B.C."/>
            <person name="Zheng X.H."/>
            <person name="Zhong F."/>
            <person name="Delcher A.L."/>
            <person name="Huson D.H."/>
            <person name="Kravitz S.A."/>
            <person name="Mouchard L."/>
            <person name="Reinert K."/>
            <person name="Remington K.A."/>
            <person name="Clark A.G."/>
            <person name="Waterman M.S."/>
            <person name="Eichler E.E."/>
            <person name="Adams M.D."/>
            <person name="Hunkapiller M.W."/>
            <person name="Myers E.W."/>
            <person name="Venter J.C."/>
        </authorList>
    </citation>
    <scope>NUCLEOTIDE SEQUENCE [LARGE SCALE GENOMIC DNA]</scope>
</reference>
<reference key="5">
    <citation type="journal article" date="2004" name="Genome Res.">
        <title>The status, quality, and expansion of the NIH full-length cDNA project: the Mammalian Gene Collection (MGC).</title>
        <authorList>
            <consortium name="The MGC Project Team"/>
        </authorList>
    </citation>
    <scope>NUCLEOTIDE SEQUENCE [LARGE SCALE MRNA] (ISOFORM 1)</scope>
    <source>
        <tissue>Muscle</tissue>
        <tissue>Placenta</tissue>
    </source>
</reference>
<reference key="6">
    <citation type="journal article" date="2005" name="Genes Dev.">
        <title>The human PAF complex coordinates transcription with events downstream of RNA synthesis.</title>
        <authorList>
            <person name="Zhu B."/>
            <person name="Mandal S.S."/>
            <person name="Pham A.D."/>
            <person name="Zheng Y."/>
            <person name="Erdjument-Bromage H."/>
            <person name="Batra S.K."/>
            <person name="Tempst P."/>
            <person name="Reinberg D."/>
        </authorList>
    </citation>
    <scope>INTERACTION WITH SKIC3</scope>
</reference>
<reference key="7">
    <citation type="journal article" date="2005" name="Mol. Cell">
        <title>Monoubiquitination of human histone H2B: the factors involved and their roles in HOX gene regulation.</title>
        <authorList>
            <person name="Zhu B."/>
            <person name="Zheng Y."/>
            <person name="Pham A.-D."/>
            <person name="Mandal S.S."/>
            <person name="Erdjument-Bromage H."/>
            <person name="Tempst P."/>
            <person name="Reinberg D."/>
        </authorList>
    </citation>
    <scope>INTERACTION WITH UBE2E1</scope>
</reference>
<reference key="8">
    <citation type="journal article" date="2005" name="Mol. Cell. Biol.">
        <title>The HRPT2 tumor suppressor gene product parafibromin associates with human PAF1 and RNA polymerase II.</title>
        <authorList>
            <person name="Yart A."/>
            <person name="Gstaiger M."/>
            <person name="Wirbelauer C."/>
            <person name="Pecnik M."/>
            <person name="Anastasiou D."/>
            <person name="Hess D."/>
            <person name="Krek W."/>
        </authorList>
    </citation>
    <scope>INTERACTION WITH CDC73 AND POLR2A</scope>
</reference>
<reference key="9">
    <citation type="journal article" date="2008" name="Proc. Natl. Acad. Sci. U.S.A.">
        <title>A quantitative atlas of mitotic phosphorylation.</title>
        <authorList>
            <person name="Dephoure N."/>
            <person name="Zhou C."/>
            <person name="Villen J."/>
            <person name="Beausoleil S.A."/>
            <person name="Bakalarski C.E."/>
            <person name="Elledge S.J."/>
            <person name="Gygi S.P."/>
        </authorList>
    </citation>
    <scope>IDENTIFICATION BY MASS SPECTROMETRY [LARGE SCALE ANALYSIS]</scope>
    <source>
        <tissue>Cervix carcinoma</tissue>
    </source>
</reference>
<reference key="10">
    <citation type="journal article" date="2009" name="Cell">
        <title>RAD6-mediated transcription-coupled H2B ubiquitylation directly stimulates H3K4 methylation in human cells.</title>
        <authorList>
            <person name="Kim J."/>
            <person name="Guermah M."/>
            <person name="McGinty R.K."/>
            <person name="Lee J.S."/>
            <person name="Tang Z."/>
            <person name="Milne T.A."/>
            <person name="Shilatifard A."/>
            <person name="Muir T.W."/>
            <person name="Roeder R.G."/>
        </authorList>
    </citation>
    <scope>FUNCTION OF THE PAF1 COMPLEX</scope>
    <scope>INTERACTION WITH RNF20 AND RNF40</scope>
</reference>
<reference key="11">
    <citation type="journal article" date="2009" name="Genes Dev.">
        <title>DSIF, the Paf1 complex, and Tat-SF1 have nonredundant, cooperative roles in RNA polymerase II elongation.</title>
        <authorList>
            <person name="Chen Y."/>
            <person name="Yamaguchi Y."/>
            <person name="Tsugeno Y."/>
            <person name="Yamamoto J."/>
            <person name="Yamada T."/>
            <person name="Nakamura M."/>
            <person name="Hisatake K."/>
            <person name="Handa H."/>
        </authorList>
    </citation>
    <scope>IDENTIFICATION IN THE PAF1 COMPLEX</scope>
    <scope>FUNCTION OF THE PAF1 COMPLEX</scope>
    <scope>INTERACTION WITH SUPT5H</scope>
</reference>
<reference key="12">
    <citation type="journal article" date="2010" name="Cancer Cell">
        <title>The PAF complex synergizes with MLL fusion proteins at HOX loci to promote leukemogenesis.</title>
        <authorList>
            <person name="Muntean A.G."/>
            <person name="Tan J."/>
            <person name="Sitwala K."/>
            <person name="Huang Y."/>
            <person name="Bronstein J."/>
            <person name="Connelly J.A."/>
            <person name="Basrur V."/>
            <person name="Elenitoba-Johnson K.S."/>
            <person name="Hess J.L."/>
        </authorList>
    </citation>
    <scope>FUNCTION OF THE PAF1 COMPLEX</scope>
    <scope>INTERACTION WITH KMT2A</scope>
</reference>
<reference key="13">
    <citation type="journal article" date="2010" name="Cell">
        <title>The human PAF1 complex acts in chromatin transcription elongation both independently and cooperatively with SII/TFIIS.</title>
        <authorList>
            <person name="Kim J."/>
            <person name="Guermah M."/>
            <person name="Roeder R.G."/>
        </authorList>
    </citation>
    <scope>IDENTIFICATION IN THE PAF1 COMPLEX</scope>
    <scope>COMPOSITION OF THE PAF1 COMPLEX</scope>
    <scope>FUNCTION OF THE PAF1 COMPLEX</scope>
    <scope>INTERACTION WITH TCEA1</scope>
</reference>
<reference key="14">
    <citation type="journal article" date="2010" name="Sci. Signal.">
        <title>Quantitative phosphoproteomics reveals widespread full phosphorylation site occupancy during mitosis.</title>
        <authorList>
            <person name="Olsen J.V."/>
            <person name="Vermeulen M."/>
            <person name="Santamaria A."/>
            <person name="Kumar C."/>
            <person name="Miller M.L."/>
            <person name="Jensen L.J."/>
            <person name="Gnad F."/>
            <person name="Cox J."/>
            <person name="Jensen T.S."/>
            <person name="Nigg E.A."/>
            <person name="Brunak S."/>
            <person name="Mann M."/>
        </authorList>
    </citation>
    <scope>IDENTIFICATION BY MASS SPECTROMETRY [LARGE SCALE ANALYSIS]</scope>
    <source>
        <tissue>Cervix carcinoma</tissue>
    </source>
</reference>
<reference key="15">
    <citation type="journal article" date="2011" name="BMC Syst. Biol.">
        <title>Initial characterization of the human central proteome.</title>
        <authorList>
            <person name="Burkard T.R."/>
            <person name="Planyavsky M."/>
            <person name="Kaupe I."/>
            <person name="Breitwieser F.P."/>
            <person name="Buerckstuemmer T."/>
            <person name="Bennett K.L."/>
            <person name="Superti-Furga G."/>
            <person name="Colinge J."/>
        </authorList>
    </citation>
    <scope>IDENTIFICATION BY MASS SPECTROMETRY [LARGE SCALE ANALYSIS]</scope>
</reference>
<reference key="16">
    <citation type="journal article" date="2011" name="Mol. Cell">
        <title>Transcriptional activators enhance polyadenylation of mRNA precursors.</title>
        <authorList>
            <person name="Nagaike T."/>
            <person name="Logan C."/>
            <person name="Hotta I."/>
            <person name="Rozenblatt-Rosen O."/>
            <person name="Meyerson M."/>
            <person name="Manley J.L."/>
        </authorList>
    </citation>
    <scope>FUNCTION</scope>
    <scope>FUNCTION OF THE PAF1 COMPLEX</scope>
</reference>
<reference key="17">
    <citation type="journal article" date="2012" name="Nature">
        <title>Suppression of the antiviral response by an influenza histone mimic.</title>
        <authorList>
            <person name="Marazzi I."/>
            <person name="Ho J.S."/>
            <person name="Kim J."/>
            <person name="Manicassamy B."/>
            <person name="Dewell S."/>
            <person name="Albrecht R.A."/>
            <person name="Seibert C.W."/>
            <person name="Schaefer U."/>
            <person name="Jeffrey K.L."/>
            <person name="Prinjha R.K."/>
            <person name="Lee K."/>
            <person name="Garcia-Sastre A."/>
            <person name="Roeder R.G."/>
            <person name="Tarakhovsky A."/>
        </authorList>
    </citation>
    <scope>FUNCTION OF THE PAF1 COMPLEX</scope>
    <scope>INTERACTION WITH INFLUENZA A NS1 PROTEIN</scope>
</reference>
<reference key="18">
    <citation type="journal article" date="2012" name="Proc. Natl. Acad. Sci. U.S.A.">
        <title>N-terminal acetylome analyses and functional insights of the N-terminal acetyltransferase NatB.</title>
        <authorList>
            <person name="Van Damme P."/>
            <person name="Lasa M."/>
            <person name="Polevoda B."/>
            <person name="Gazquez C."/>
            <person name="Elosegui-Artola A."/>
            <person name="Kim D.S."/>
            <person name="De Juan-Pardo E."/>
            <person name="Demeyer K."/>
            <person name="Hole K."/>
            <person name="Larrea E."/>
            <person name="Timmerman E."/>
            <person name="Prieto J."/>
            <person name="Arnesen T."/>
            <person name="Sherman F."/>
            <person name="Gevaert K."/>
            <person name="Aldabe R."/>
        </authorList>
    </citation>
    <scope>IDENTIFICATION BY MASS SPECTROMETRY [LARGE SCALE ANALYSIS]</scope>
</reference>
<reference key="19">
    <citation type="journal article" date="2013" name="J. Proteome Res.">
        <title>Toward a comprehensive characterization of a human cancer cell phosphoproteome.</title>
        <authorList>
            <person name="Zhou H."/>
            <person name="Di Palma S."/>
            <person name="Preisinger C."/>
            <person name="Peng M."/>
            <person name="Polat A.N."/>
            <person name="Heck A.J."/>
            <person name="Mohammed S."/>
        </authorList>
    </citation>
    <scope>PHOSPHORYLATION [LARGE SCALE ANALYSIS] AT SER-117</scope>
    <scope>IDENTIFICATION BY MASS SPECTROMETRY [LARGE SCALE ANALYSIS]</scope>
    <source>
        <tissue>Cervix carcinoma</tissue>
    </source>
</reference>
<reference key="20">
    <citation type="journal article" date="2017" name="Nat. Struct. Mol. Biol.">
        <title>Site-specific mapping of the human SUMO proteome reveals co-modification with phosphorylation.</title>
        <authorList>
            <person name="Hendriks I.A."/>
            <person name="Lyon D."/>
            <person name="Young C."/>
            <person name="Jensen L.J."/>
            <person name="Vertegaal A.C."/>
            <person name="Nielsen M.L."/>
        </authorList>
    </citation>
    <scope>SUMOYLATION [LARGE SCALE ANALYSIS] AT LYS-133 AND LYS-154</scope>
    <scope>IDENTIFICATION BY MASS SPECTROMETRY [LARGE SCALE ANALYSIS]</scope>
</reference>
<reference key="21">
    <citation type="journal article" date="2018" name="Cell">
        <title>Comparative Flavivirus-Host Protein Interaction Mapping Reveals Mechanisms of Dengue and Zika Virus Pathogenesis.</title>
        <authorList>
            <person name="Shah P.S."/>
            <person name="Link N."/>
            <person name="Jang G.M."/>
            <person name="Sharp P.P."/>
            <person name="Zhu T."/>
            <person name="Swaney D.L."/>
            <person name="Johnson J.R."/>
            <person name="Von Dollen J."/>
            <person name="Ramage H.R."/>
            <person name="Satkamp L."/>
            <person name="Newton B."/>
            <person name="Huettenhain R."/>
            <person name="Petit M.J."/>
            <person name="Baum T."/>
            <person name="Everitt A."/>
            <person name="Laufman O."/>
            <person name="Tassetto M."/>
            <person name="Shales M."/>
            <person name="Stevenson E."/>
            <person name="Iglesias G.N."/>
            <person name="Shokat L."/>
            <person name="Tripathi S."/>
            <person name="Balasubramaniam V."/>
            <person name="Webb L.G."/>
            <person name="Aguirre S."/>
            <person name="Willsey A.J."/>
            <person name="Garcia-Sastre A."/>
            <person name="Pollard K.S."/>
            <person name="Cherry S."/>
            <person name="Gamarnik A.V."/>
            <person name="Marazzi I."/>
            <person name="Taunton J."/>
            <person name="Fernandez-Sesma A."/>
            <person name="Bellen H.J."/>
            <person name="Andino R."/>
            <person name="Krogan N.J."/>
        </authorList>
    </citation>
    <scope>INTERACTION WITH ZIKA VIRUS FRENCH POLYNESIA 10087PF/2013 NS5; DENGUE VIRUS DENV2 16681 NS5 AND DENGUE VIRUS DENV4 DOMINICA/814669/1981 NS5</scope>
</reference>
<reference key="22">
    <citation type="journal article" date="2018" name="Nat. Commun.">
        <title>A peptide encoded by circular form of LINC-PINT suppresses oncogenic transcriptional elongation in glioblastoma.</title>
        <authorList>
            <person name="Zhang M."/>
            <person name="Zhao K."/>
            <person name="Xu X."/>
            <person name="Yang Y."/>
            <person name="Yan S."/>
            <person name="Wei P."/>
            <person name="Liu H."/>
            <person name="Xu J."/>
            <person name="Xiao F."/>
            <person name="Zhou H."/>
            <person name="Yang X."/>
            <person name="Huang N."/>
            <person name="Liu J."/>
            <person name="He K."/>
            <person name="Xie K."/>
            <person name="Zhang G."/>
            <person name="Huang S."/>
            <person name="Zhang N."/>
        </authorList>
    </citation>
    <scope>INTERACTION WITH PINT87AA</scope>
    <scope>SUBCELLULAR LOCATION</scope>
</reference>
<feature type="chain" id="PRO_0000326400" description="RNA polymerase II-associated factor 1 homolog">
    <location>
        <begin position="1"/>
        <end position="531"/>
    </location>
</feature>
<feature type="region of interest" description="Disordered" evidence="3">
    <location>
        <begin position="1"/>
        <end position="23"/>
    </location>
</feature>
<feature type="region of interest" description="Interaction with PINT87aa" evidence="14">
    <location>
        <begin position="150"/>
        <end position="300"/>
    </location>
</feature>
<feature type="region of interest" description="Disordered" evidence="3">
    <location>
        <begin position="361"/>
        <end position="531"/>
    </location>
</feature>
<feature type="coiled-coil region" evidence="2">
    <location>
        <begin position="352"/>
        <end position="400"/>
    </location>
</feature>
<feature type="compositionally biased region" description="Basic and acidic residues" evidence="3">
    <location>
        <begin position="361"/>
        <end position="374"/>
    </location>
</feature>
<feature type="compositionally biased region" description="Acidic residues" evidence="3">
    <location>
        <begin position="375"/>
        <end position="398"/>
    </location>
</feature>
<feature type="compositionally biased region" description="Basic and acidic residues" evidence="3">
    <location>
        <begin position="399"/>
        <end position="434"/>
    </location>
</feature>
<feature type="compositionally biased region" description="Basic and acidic residues" evidence="3">
    <location>
        <begin position="442"/>
        <end position="453"/>
    </location>
</feature>
<feature type="compositionally biased region" description="Acidic residues" evidence="3">
    <location>
        <begin position="458"/>
        <end position="470"/>
    </location>
</feature>
<feature type="compositionally biased region" description="Low complexity" evidence="3">
    <location>
        <begin position="476"/>
        <end position="485"/>
    </location>
</feature>
<feature type="compositionally biased region" description="Low complexity" evidence="3">
    <location>
        <begin position="498"/>
        <end position="507"/>
    </location>
</feature>
<feature type="modified residue" description="Phosphoserine" evidence="18">
    <location>
        <position position="117"/>
    </location>
</feature>
<feature type="modified residue" description="Phosphoserine" evidence="1">
    <location>
        <position position="456"/>
    </location>
</feature>
<feature type="cross-link" description="Glycyl lysine isopeptide (Lys-Gly) (interchain with G-Cter in SUMO2)" evidence="19">
    <location>
        <position position="133"/>
    </location>
</feature>
<feature type="cross-link" description="Glycyl lysine isopeptide (Lys-Gly) (interchain with G-Cter in SUMO2)" evidence="19">
    <location>
        <position position="154"/>
    </location>
</feature>
<feature type="splice variant" id="VSP_032650" description="In isoform 2 and isoform 3." evidence="16">
    <location>
        <begin position="17"/>
        <end position="26"/>
    </location>
</feature>
<feature type="splice variant" id="VSP_032651" description="In isoform 2." evidence="17">
    <location>
        <begin position="190"/>
        <end position="212"/>
    </location>
</feature>
<feature type="splice variant" id="VSP_032652" description="In isoform 2." evidence="17">
    <original>DEEQEKGSSSEKEGSEDEHSGSESEREEGDRDEASDKSGSGEDESSEDEARAARDKEEIFGSDADSEDDADSDDEDRGQAQGGSDNDSDSGSNGGGQRSRSHSRSASPFPSGSE</original>
    <variation>VMLILRTMPTLMMRTEDRPKVAVTMIQTAAAMGVASGAGATAAAPVPSPVAASTRPRRMAVKLQLLIPVKLIVTVTESQGIQGWFRHHYCEQQSTFLVVCL</variation>
    <location>
        <begin position="395"/>
        <end position="508"/>
    </location>
</feature>
<feature type="splice variant" id="VSP_055740" description="In isoform 3." evidence="16">
    <original>DEEQEKGSSSEKEGSEDEHSGSESEREEGDRDEASDKSGSGEDESSEDEARAARDKEEIFGSDADSEDDADSDDEDRGQAQGGSDNDSDSGSNGGGQRSRS</original>
    <variation>VMLILRTMPTLMMRTEDRPKVAVTMIQTAAAMGVASGAGATAAAPVPSPVAASTRPRRMAVKLQLLIPVKLIVTVTESQGIQGWFRHHYCEQQSTFLVVCL</variation>
    <location>
        <begin position="395"/>
        <end position="495"/>
    </location>
</feature>
<feature type="splice variant" id="VSP_055741" description="In isoform 3." evidence="16">
    <location>
        <begin position="496"/>
        <end position="531"/>
    </location>
</feature>
<feature type="sequence conflict" description="In Ref. 3; BAA92020." evidence="17" ref="3">
    <original>F</original>
    <variation>I</variation>
    <location>
        <position position="58"/>
    </location>
</feature>
<feature type="sequence conflict" description="In Ref. 3; BAC05305." evidence="17" ref="3">
    <original>K</original>
    <variation>R</variation>
    <location>
        <position position="68"/>
    </location>
</feature>
<feature type="sequence conflict" description="In Ref. 3; BAA92020." evidence="17" ref="3">
    <original>E</original>
    <variation>G</variation>
    <location>
        <position position="152"/>
    </location>
</feature>
<feature type="sequence conflict" description="In Ref. 3; BAA92020." evidence="17" ref="3">
    <original>E</original>
    <variation>G</variation>
    <location>
        <position position="378"/>
    </location>
</feature>
<feature type="helix" evidence="22">
    <location>
        <begin position="64"/>
        <end position="67"/>
    </location>
</feature>
<feature type="helix" evidence="21">
    <location>
        <begin position="68"/>
        <end position="72"/>
    </location>
</feature>
<feature type="strand" evidence="21">
    <location>
        <begin position="74"/>
        <end position="76"/>
    </location>
</feature>
<feature type="turn" evidence="21">
    <location>
        <begin position="78"/>
        <end position="81"/>
    </location>
</feature>
<feature type="strand" evidence="23">
    <location>
        <begin position="86"/>
        <end position="88"/>
    </location>
</feature>
<feature type="turn" evidence="21">
    <location>
        <begin position="89"/>
        <end position="92"/>
    </location>
</feature>
<feature type="strand" evidence="23">
    <location>
        <begin position="95"/>
        <end position="97"/>
    </location>
</feature>
<feature type="helix" evidence="21">
    <location>
        <begin position="102"/>
        <end position="107"/>
    </location>
</feature>
<feature type="strand" evidence="22">
    <location>
        <begin position="109"/>
        <end position="111"/>
    </location>
</feature>
<feature type="helix" evidence="22">
    <location>
        <begin position="123"/>
        <end position="125"/>
    </location>
</feature>
<feature type="helix" evidence="20">
    <location>
        <begin position="172"/>
        <end position="187"/>
    </location>
</feature>
<feature type="strand" evidence="23">
    <location>
        <begin position="194"/>
        <end position="196"/>
    </location>
</feature>
<feature type="strand" evidence="20">
    <location>
        <begin position="201"/>
        <end position="206"/>
    </location>
</feature>
<feature type="strand" evidence="20">
    <location>
        <begin position="211"/>
        <end position="215"/>
    </location>
</feature>
<feature type="strand" evidence="20">
    <location>
        <begin position="231"/>
        <end position="234"/>
    </location>
</feature>
<feature type="strand" evidence="20">
    <location>
        <begin position="238"/>
        <end position="241"/>
    </location>
</feature>
<feature type="helix" evidence="20">
    <location>
        <begin position="246"/>
        <end position="249"/>
    </location>
</feature>
<feature type="turn" evidence="20">
    <location>
        <begin position="250"/>
        <end position="252"/>
    </location>
</feature>
<feature type="strand" evidence="20">
    <location>
        <begin position="253"/>
        <end position="259"/>
    </location>
</feature>
<feature type="strand" evidence="23">
    <location>
        <begin position="275"/>
        <end position="280"/>
    </location>
</feature>
<feature type="strand" evidence="23">
    <location>
        <begin position="282"/>
        <end position="286"/>
    </location>
</feature>
<feature type="strand" evidence="23">
    <location>
        <begin position="291"/>
        <end position="293"/>
    </location>
</feature>
<feature type="turn" evidence="22">
    <location>
        <begin position="305"/>
        <end position="308"/>
    </location>
</feature>
<feature type="strand" evidence="23">
    <location>
        <begin position="313"/>
        <end position="315"/>
    </location>
</feature>
<evidence type="ECO:0000250" key="1">
    <source>
        <dbReference type="UniProtKB" id="Q8K2T8"/>
    </source>
</evidence>
<evidence type="ECO:0000255" key="2"/>
<evidence type="ECO:0000256" key="3">
    <source>
        <dbReference type="SAM" id="MobiDB-lite"/>
    </source>
</evidence>
<evidence type="ECO:0000269" key="4">
    <source>
    </source>
</evidence>
<evidence type="ECO:0000269" key="5">
    <source>
    </source>
</evidence>
<evidence type="ECO:0000269" key="6">
    <source>
    </source>
</evidence>
<evidence type="ECO:0000269" key="7">
    <source>
    </source>
</evidence>
<evidence type="ECO:0000269" key="8">
    <source>
    </source>
</evidence>
<evidence type="ECO:0000269" key="9">
    <source>
    </source>
</evidence>
<evidence type="ECO:0000269" key="10">
    <source>
    </source>
</evidence>
<evidence type="ECO:0000269" key="11">
    <source>
    </source>
</evidence>
<evidence type="ECO:0000269" key="12">
    <source>
    </source>
</evidence>
<evidence type="ECO:0000269" key="13">
    <source>
    </source>
</evidence>
<evidence type="ECO:0000269" key="14">
    <source>
    </source>
</evidence>
<evidence type="ECO:0000269" key="15">
    <source>
    </source>
</evidence>
<evidence type="ECO:0000303" key="16">
    <source>
    </source>
</evidence>
<evidence type="ECO:0000305" key="17"/>
<evidence type="ECO:0007744" key="18">
    <source>
    </source>
</evidence>
<evidence type="ECO:0007744" key="19">
    <source>
    </source>
</evidence>
<evidence type="ECO:0007829" key="20">
    <source>
        <dbReference type="PDB" id="4M6T"/>
    </source>
</evidence>
<evidence type="ECO:0007829" key="21">
    <source>
        <dbReference type="PDB" id="5ZYQ"/>
    </source>
</evidence>
<evidence type="ECO:0007829" key="22">
    <source>
        <dbReference type="PDB" id="6TED"/>
    </source>
</evidence>
<evidence type="ECO:0007829" key="23">
    <source>
        <dbReference type="PDB" id="7OOP"/>
    </source>
</evidence>
<name>PAF1_HUMAN</name>
<sequence length="531" mass="59976">MAPTIQTQAQREDGHRPNSHRTLPERSGVVCRVKYCNSLPDIPFDPKFITYPFDQNRFVQYKATSLEKQHKHDLLTEPDLGVTIDLINPDTYRIDPNVLLDPADEKLLEEEIQAPTSSKRSQQHAKVVPWMRKTEYISTEFNRYGISNEKPEVKIGVSVKQQFTEEEIYKDRDSQITAIEKTFEDAQKSISQHYSKPRVTPVEVMPVFPDFKMWINPCAQVIFDSDPAPKDTSGAAALEMMSQAMIRGMMDEEGNQFVAYFLPVEETLKKRKRDQEEEMDYAPDDVYDYKIAREYNWNVKNKASKGYEENYFFIFREGDGVYYNELETRVRLSKRRAKAGVQSGTNALLVVKHRDMNEKELEAQEARKAQLENHEPEEEEEEEMETEEKEAGGSDEEQEKGSSSEKEGSEDEHSGSESEREEGDRDEASDKSGSGEDESSEDEARAARDKEEIFGSDADSEDDADSDDEDRGQAQGGSDNDSDSGSNGGGQRSRSHSRSASPFPSGSEHSAQEDGSEAAASDSSEADSDSD</sequence>
<proteinExistence type="evidence at protein level"/>
<accession>Q8N7H5</accession>
<accession>M0QX35</accession>
<accession>O75239</accession>
<accession>Q9H166</accession>
<accession>Q9NUU9</accession>
<comment type="function">
    <text evidence="7 8 9 10 11 12 13">Component of the PAF1 complex (PAF1C) which has multiple functions during transcription by RNA polymerase II and is implicated in regulation of development and maintenance of embryonic stem cell pluripotency. PAF1C associates with RNA polymerase II through interaction with POLR2A CTD non-phosphorylated and 'Ser-2'- and 'Ser-5'-phosphorylated forms and is involved in transcriptional elongation, acting both independently and synergistically with TCEA1 and in cooperation with the DSIF complex and HTATSF1. PAF1C is required for transcription of Hox and Wnt target genes. PAF1C is involved in hematopoiesis and stimulates transcriptional activity of KMT2A/MLL1; it promotes leukemogenesis through association with KMT2A/MLL1-rearranged oncoproteins, such as KMT2A/MLL1-MLLT3/AF9 and KMT2A/MLL1-MLLT1/ENL. PAF1C is involved in histone modifications such as ubiquitination of histone H2B and methylation on histone H3 'Lys-4' (H3K4me3). PAF1C recruits the RNF20/40 E3 ubiquitin-protein ligase complex and the E2 enzyme UBE2A or UBE2B to chromatin which mediate monoubiquitination of 'Lys-120' of histone H2B (H2BK120ub1); UB2A/B-mediated H2B ubiquitination is proposed to be coupled to transcription. PAF1C is involved in mRNA 3' end formation probably through association with cleavage and poly(A) factors. In case of infection by influenza A strain H3N2, PAF1C associates with viral NS1 protein, thereby regulating gene transcription. Connects PAF1C with the RNF20/40 E3 ubiquitin-protein ligase complex. Involved in polyadenylation of mRNA precursors. Has oncogenic activity in vivo and in vitro.</text>
</comment>
<comment type="subunit">
    <text evidence="1 4 5 6 7 8 9 10 11 14">Component of the PAF1 complex, which consists of CDC73, PAF1, LEO1, CTR9, RTF1 and SKIC8 (PubMed:19952111, PubMed:20178742). The PAF1 complex interacts with PHF5A (By similarity). Interacts with POLR2A, TCEA1, SKIC3, KMT2A/MLL1, SUPT5H, RNF20 and RNF40 (PubMed:15923622, PubMed:16024656, PubMed:16491129, PubMed:19410543, PubMed:19952111, PubMed:20178742, PubMed:20541477). Interacts with UBE2E1 (PubMed:16307923). Interacts with PINT87aa which is encoded by the circular form of the long non-coding RNA LINC-PINT; the interaction enhances the binding of the PAF1 complex to target gene promoters and may anchor the complex on target gene promoters, sequentially pausing RNA polymerase II-induced mRNA elongation (PubMed:30367041).</text>
</comment>
<comment type="subunit">
    <text evidence="13">(Microbial infection) Interacts with influenza A strain H3N2 NS1 protein; the interaction interferes with host cell gene transcription, specifically with that of antiviral genes.</text>
</comment>
<comment type="subunit">
    <text evidence="15">(Microbial infection) The PAF1 complex interacts with Zika virus French Polynesia 10087PF/2013 non-structural protein 5/NS5 (PubMed:30550790). The interaction with viral NS5 proteins may reduce the antiviral immune response by inhibiting the recruitment of the PAF1 complex to interferon-stimulated genes, thus preventing their transcription (PubMed:30550790).</text>
</comment>
<comment type="subunit">
    <text evidence="15">(Microbial infection) The PAF1 complex interacts with Dengue virus DENV2 16681 non-structural protein 5/NS5 (PubMed:30550790). The PAF1 complex interacts with Dengue virus DENV4 Dominica/814669/1981 non-structural protein 5/NS5 (PubMed:30550790). The interaction with viral NS5 proteins may reduce the antiviral immune response by inhibiting the recruitment of the PAF1 complex to interferon-stimulated genes, thus preventing their transcription (PubMed:30550790).</text>
</comment>
<comment type="interaction">
    <interactant intactId="EBI-2607770">
        <id>Q8N7H5</id>
    </interactant>
    <interactant intactId="EBI-930143">
        <id>Q6P1J9</id>
        <label>CDC73</label>
    </interactant>
    <organismsDiffer>false</organismsDiffer>
    <experiments>33</experiments>
</comment>
<comment type="interaction">
    <interactant intactId="EBI-2607770">
        <id>Q8N7H5</id>
    </interactant>
    <interactant intactId="EBI-1019583">
        <id>Q6PD62</id>
        <label>CTR9</label>
    </interactant>
    <organismsDiffer>false</organismsDiffer>
    <experiments>29</experiments>
</comment>
<comment type="interaction">
    <interactant intactId="EBI-2607770">
        <id>Q8N7H5</id>
    </interactant>
    <interactant intactId="EBI-740459">
        <id>P51116</id>
        <label>FXR2</label>
    </interactant>
    <organismsDiffer>false</organismsDiffer>
    <experiments>4</experiments>
</comment>
<comment type="interaction">
    <interactant intactId="EBI-2607770">
        <id>Q8N7H5</id>
    </interactant>
    <interactant intactId="EBI-352682">
        <id>P04792</id>
        <label>HSPB1</label>
    </interactant>
    <organismsDiffer>false</organismsDiffer>
    <experiments>2</experiments>
</comment>
<comment type="interaction">
    <interactant intactId="EBI-2607770">
        <id>Q8N7H5</id>
    </interactant>
    <interactant intactId="EBI-591370">
        <id>Q03164</id>
        <label>KMT2A</label>
    </interactant>
    <organismsDiffer>false</organismsDiffer>
    <experiments>4</experiments>
</comment>
<comment type="interaction">
    <interactant intactId="EBI-2607770">
        <id>Q8N7H5</id>
    </interactant>
    <interactant intactId="EBI-932432">
        <id>Q8WVC0</id>
        <label>LEO1</label>
    </interactant>
    <organismsDiffer>false</organismsDiffer>
    <experiments>30</experiments>
</comment>
<comment type="interaction">
    <interactant intactId="EBI-2607770">
        <id>Q8N7H5</id>
    </interactant>
    <interactant intactId="EBI-27121529">
        <id>A0A455ZAR2</id>
        <label>LINC-PINT</label>
    </interactant>
    <organismsDiffer>false</organismsDiffer>
    <experiments>5</experiments>
</comment>
<comment type="interaction">
    <interactant intactId="EBI-2607770">
        <id>Q8N7H5</id>
    </interactant>
    <interactant intactId="EBI-295301">
        <id>P24928</id>
        <label>POLR2A</label>
    </interactant>
    <organismsDiffer>false</organismsDiffer>
    <experiments>5</experiments>
</comment>
<comment type="interaction">
    <interactant intactId="EBI-2607770">
        <id>Q8N7H5</id>
    </interactant>
    <interactant intactId="EBI-1055239">
        <id>Q92541</id>
        <label>RTF1</label>
    </interactant>
    <organismsDiffer>false</organismsDiffer>
    <experiments>17</experiments>
</comment>
<comment type="interaction">
    <interactant intactId="EBI-2607770">
        <id>Q8N7H5</id>
    </interactant>
    <interactant intactId="EBI-6083436">
        <id>Q6PGP7</id>
        <label>SKIC3</label>
    </interactant>
    <organismsDiffer>false</organismsDiffer>
    <experiments>2</experiments>
</comment>
<comment type="interaction">
    <interactant intactId="EBI-2607770">
        <id>Q8N7H5</id>
    </interactant>
    <interactant intactId="EBI-2608271">
        <id>P23193</id>
        <label>TCEA1</label>
    </interactant>
    <organismsDiffer>false</organismsDiffer>
    <experiments>4</experiments>
</comment>
<comment type="interaction">
    <interactant intactId="EBI-2607770">
        <id>Q8N7H5</id>
    </interactant>
    <interactant intactId="EBI-348546">
        <id>P51965</id>
        <label>UBE2E1</label>
    </interactant>
    <organismsDiffer>false</organismsDiffer>
    <experiments>2</experiments>
</comment>
<comment type="interaction">
    <interactant intactId="EBI-2607770">
        <id>Q8N7H5</id>
    </interactant>
    <interactant intactId="EBI-4291940">
        <id>B2BUF1</id>
        <label>NS1</label>
    </interactant>
    <organismsDiffer>true</organismsDiffer>
    <experiments>6</experiments>
</comment>
<comment type="subcellular location">
    <subcellularLocation>
        <location evidence="7 14">Nucleus</location>
    </subcellularLocation>
    <text>Punctuate distribution throughout the nucleus except in nucleoli and the perinuclear chromatin.</text>
</comment>
<comment type="alternative products">
    <event type="alternative splicing"/>
    <isoform>
        <id>Q8N7H5-1</id>
        <name>1</name>
        <sequence type="displayed"/>
    </isoform>
    <isoform>
        <id>Q8N7H5-2</id>
        <name>2</name>
        <sequence type="described" ref="VSP_032650 VSP_032651 VSP_032652"/>
    </isoform>
    <isoform>
        <id>Q8N7H5-3</id>
        <name>3</name>
        <sequence type="described" ref="VSP_032650 VSP_055740 VSP_055741"/>
    </isoform>
</comment>
<comment type="similarity">
    <text evidence="17">Belongs to the PAF1 family.</text>
</comment>
<comment type="sequence caution" evidence="17">
    <conflict type="erroneous gene model prediction">
        <sequence resource="EMBL-CDS" id="AAC25503"/>
    </conflict>
</comment>
<comment type="sequence caution" evidence="17">
    <conflict type="erroneous gene model prediction">
        <sequence resource="EMBL-CDS" id="EAW56880"/>
    </conflict>
</comment>
<comment type="sequence caution" evidence="17">
    <conflict type="erroneous gene model prediction">
        <sequence resource="EMBL-CDS" id="EAW56881"/>
    </conflict>
</comment>
<comment type="online information" name="Atlas of Genetics and Cytogenetics in Oncology and Haematology">
    <link uri="https://atlasgeneticsoncology.org/gene/44202/PAF1"/>
</comment>
<gene>
    <name type="primary">PAF1</name>
    <name type="synonym">PD2</name>
</gene>
<protein>
    <recommendedName>
        <fullName>RNA polymerase II-associated factor 1 homolog</fullName>
        <shortName>hPAF1</shortName>
    </recommendedName>
    <alternativeName>
        <fullName>Pancreatic differentiation protein 2</fullName>
    </alternativeName>
</protein>
<keyword id="KW-0002">3D-structure</keyword>
<keyword id="KW-0025">Alternative splicing</keyword>
<keyword id="KW-0175">Coiled coil</keyword>
<keyword id="KW-1017">Isopeptide bond</keyword>
<keyword id="KW-0539">Nucleus</keyword>
<keyword id="KW-0597">Phosphoprotein</keyword>
<keyword id="KW-1267">Proteomics identification</keyword>
<keyword id="KW-1185">Reference proteome</keyword>
<keyword id="KW-0804">Transcription</keyword>
<keyword id="KW-0805">Transcription regulation</keyword>
<keyword id="KW-0043">Tumor suppressor</keyword>
<keyword id="KW-0832">Ubl conjugation</keyword>
<keyword id="KW-0879">Wnt signaling pathway</keyword>
<organism>
    <name type="scientific">Homo sapiens</name>
    <name type="common">Human</name>
    <dbReference type="NCBI Taxonomy" id="9606"/>
    <lineage>
        <taxon>Eukaryota</taxon>
        <taxon>Metazoa</taxon>
        <taxon>Chordata</taxon>
        <taxon>Craniata</taxon>
        <taxon>Vertebrata</taxon>
        <taxon>Euteleostomi</taxon>
        <taxon>Mammalia</taxon>
        <taxon>Eutheria</taxon>
        <taxon>Euarchontoglires</taxon>
        <taxon>Primates</taxon>
        <taxon>Haplorrhini</taxon>
        <taxon>Catarrhini</taxon>
        <taxon>Hominidae</taxon>
        <taxon>Homo</taxon>
    </lineage>
</organism>
<dbReference type="EMBL" id="AJ401156">
    <property type="protein sequence ID" value="CAC20564.1"/>
    <property type="molecule type" value="mRNA"/>
</dbReference>
<dbReference type="EMBL" id="AK001985">
    <property type="protein sequence ID" value="BAA92020.1"/>
    <property type="molecule type" value="mRNA"/>
</dbReference>
<dbReference type="EMBL" id="AK098423">
    <property type="protein sequence ID" value="BAC05305.1"/>
    <property type="molecule type" value="mRNA"/>
</dbReference>
<dbReference type="EMBL" id="AC005239">
    <property type="protein sequence ID" value="AAC25503.1"/>
    <property type="status" value="ALT_SEQ"/>
    <property type="molecule type" value="Genomic_DNA"/>
</dbReference>
<dbReference type="EMBL" id="CH471126">
    <property type="protein sequence ID" value="EAW56880.1"/>
    <property type="status" value="ALT_SEQ"/>
    <property type="molecule type" value="Genomic_DNA"/>
</dbReference>
<dbReference type="EMBL" id="CH471126">
    <property type="protein sequence ID" value="EAW56881.1"/>
    <property type="status" value="ALT_SEQ"/>
    <property type="molecule type" value="Genomic_DNA"/>
</dbReference>
<dbReference type="EMBL" id="CH471126">
    <property type="protein sequence ID" value="EAW56883.1"/>
    <property type="molecule type" value="Genomic_DNA"/>
</dbReference>
<dbReference type="EMBL" id="BC000017">
    <property type="protein sequence ID" value="AAH00017.1"/>
    <property type="molecule type" value="mRNA"/>
</dbReference>
<dbReference type="EMBL" id="BC013402">
    <property type="protein sequence ID" value="AAH13402.1"/>
    <property type="molecule type" value="mRNA"/>
</dbReference>
<dbReference type="CCDS" id="CCDS12533.1">
    <molecule id="Q8N7H5-1"/>
</dbReference>
<dbReference type="CCDS" id="CCDS59387.1">
    <molecule id="Q8N7H5-3"/>
</dbReference>
<dbReference type="RefSeq" id="NP_001243755.1">
    <molecule id="Q8N7H5-3"/>
    <property type="nucleotide sequence ID" value="NM_001256826.2"/>
</dbReference>
<dbReference type="RefSeq" id="NP_061961.2">
    <molecule id="Q8N7H5-1"/>
    <property type="nucleotide sequence ID" value="NM_019088.3"/>
</dbReference>
<dbReference type="PDB" id="4M6T">
    <property type="method" value="X-ray"/>
    <property type="resolution" value="2.50 A"/>
    <property type="chains" value="A=170-250"/>
</dbReference>
<dbReference type="PDB" id="5ZYQ">
    <property type="method" value="X-ray"/>
    <property type="resolution" value="2.53 A"/>
    <property type="chains" value="A=57-116"/>
</dbReference>
<dbReference type="PDB" id="6GMH">
    <property type="method" value="EM"/>
    <property type="resolution" value="3.10 A"/>
    <property type="chains" value="V=1-531"/>
</dbReference>
<dbReference type="PDB" id="6TED">
    <property type="method" value="EM"/>
    <property type="resolution" value="3.10 A"/>
    <property type="chains" value="V=1-531"/>
</dbReference>
<dbReference type="PDB" id="7OOP">
    <property type="method" value="EM"/>
    <property type="resolution" value="2.90 A"/>
    <property type="chains" value="V=1-531"/>
</dbReference>
<dbReference type="PDB" id="7OPC">
    <property type="method" value="EM"/>
    <property type="resolution" value="3.00 A"/>
    <property type="chains" value="V=1-531"/>
</dbReference>
<dbReference type="PDB" id="7OPD">
    <property type="method" value="EM"/>
    <property type="resolution" value="3.00 A"/>
    <property type="chains" value="V=1-531"/>
</dbReference>
<dbReference type="PDB" id="7UNC">
    <property type="method" value="EM"/>
    <property type="resolution" value="3.00 A"/>
    <property type="chains" value="V=1-531"/>
</dbReference>
<dbReference type="PDB" id="7UND">
    <property type="method" value="EM"/>
    <property type="resolution" value="3.00 A"/>
    <property type="chains" value="V=1-531"/>
</dbReference>
<dbReference type="PDB" id="8A3Y">
    <property type="method" value="EM"/>
    <property type="resolution" value="3.30 A"/>
    <property type="chains" value="V=25-335"/>
</dbReference>
<dbReference type="PDB" id="9EGX">
    <property type="method" value="EM"/>
    <property type="resolution" value="2.90 A"/>
    <property type="chains" value="V=1-531"/>
</dbReference>
<dbReference type="PDB" id="9EGY">
    <property type="method" value="EM"/>
    <property type="resolution" value="2.90 A"/>
    <property type="chains" value="V=1-531"/>
</dbReference>
<dbReference type="PDB" id="9EGZ">
    <property type="method" value="EM"/>
    <property type="resolution" value="2.90 A"/>
    <property type="chains" value="V=1-531"/>
</dbReference>
<dbReference type="PDB" id="9EH0">
    <property type="method" value="EM"/>
    <property type="resolution" value="3.60 A"/>
    <property type="chains" value="V=1-531"/>
</dbReference>
<dbReference type="PDB" id="9EH2">
    <property type="method" value="EM"/>
    <property type="resolution" value="3.10 A"/>
    <property type="chains" value="V=1-531"/>
</dbReference>
<dbReference type="PDBsum" id="4M6T"/>
<dbReference type="PDBsum" id="5ZYQ"/>
<dbReference type="PDBsum" id="6GMH"/>
<dbReference type="PDBsum" id="6TED"/>
<dbReference type="PDBsum" id="7OOP"/>
<dbReference type="PDBsum" id="7OPC"/>
<dbReference type="PDBsum" id="7OPD"/>
<dbReference type="PDBsum" id="7UNC"/>
<dbReference type="PDBsum" id="7UND"/>
<dbReference type="PDBsum" id="8A3Y"/>
<dbReference type="PDBsum" id="9EGX"/>
<dbReference type="PDBsum" id="9EGY"/>
<dbReference type="PDBsum" id="9EGZ"/>
<dbReference type="PDBsum" id="9EH0"/>
<dbReference type="PDBsum" id="9EH2"/>
<dbReference type="EMDB" id="EMD-0031"/>
<dbReference type="EMDB" id="EMD-10480"/>
<dbReference type="EMDB" id="EMD-13010"/>
<dbReference type="EMDB" id="EMD-13015"/>
<dbReference type="EMDB" id="EMD-13016"/>
<dbReference type="EMDB" id="EMD-15127"/>
<dbReference type="EMDB" id="EMD-26620"/>
<dbReference type="EMDB" id="EMD-26621"/>
<dbReference type="EMDB" id="EMD-48039"/>
<dbReference type="EMDB" id="EMD-48040"/>
<dbReference type="EMDB" id="EMD-48041"/>
<dbReference type="EMDB" id="EMD-48042"/>
<dbReference type="EMDB" id="EMD-48043"/>
<dbReference type="EMDB" id="EMD-48044"/>
<dbReference type="SMR" id="Q8N7H5"/>
<dbReference type="BioGRID" id="120081">
    <property type="interactions" value="269"/>
</dbReference>
<dbReference type="ComplexPortal" id="CPX-2381">
    <property type="entry name" value="PAF1 complex"/>
</dbReference>
<dbReference type="CORUM" id="Q8N7H5"/>
<dbReference type="DIP" id="DIP-48673N"/>
<dbReference type="FunCoup" id="Q8N7H5">
    <property type="interactions" value="4515"/>
</dbReference>
<dbReference type="IntAct" id="Q8N7H5">
    <property type="interactions" value="103"/>
</dbReference>
<dbReference type="MINT" id="Q8N7H5"/>
<dbReference type="STRING" id="9606.ENSP00000221265"/>
<dbReference type="GlyGen" id="Q8N7H5">
    <property type="glycosylation" value="3 sites, 1 O-linked glycan (3 sites)"/>
</dbReference>
<dbReference type="iPTMnet" id="Q8N7H5"/>
<dbReference type="PhosphoSitePlus" id="Q8N7H5"/>
<dbReference type="BioMuta" id="PAF1"/>
<dbReference type="DMDM" id="182670295"/>
<dbReference type="jPOST" id="Q8N7H5"/>
<dbReference type="MassIVE" id="Q8N7H5"/>
<dbReference type="PaxDb" id="9606-ENSP00000221265"/>
<dbReference type="PeptideAtlas" id="Q8N7H5"/>
<dbReference type="ProteomicsDB" id="72295">
    <molecule id="Q8N7H5-1"/>
</dbReference>
<dbReference type="ProteomicsDB" id="72296">
    <molecule id="Q8N7H5-2"/>
</dbReference>
<dbReference type="Pumba" id="Q8N7H5"/>
<dbReference type="Antibodypedia" id="30305">
    <property type="antibodies" value="229 antibodies from 27 providers"/>
</dbReference>
<dbReference type="DNASU" id="54623"/>
<dbReference type="Ensembl" id="ENST00000221265.8">
    <molecule id="Q8N7H5-1"/>
    <property type="protein sequence ID" value="ENSP00000221265.2"/>
    <property type="gene ID" value="ENSG00000006712.15"/>
</dbReference>
<dbReference type="Ensembl" id="ENST00000595564.5">
    <molecule id="Q8N7H5-3"/>
    <property type="protein sequence ID" value="ENSP00000468874.1"/>
    <property type="gene ID" value="ENSG00000006712.15"/>
</dbReference>
<dbReference type="GeneID" id="54623"/>
<dbReference type="KEGG" id="hsa:54623"/>
<dbReference type="MANE-Select" id="ENST00000221265.8">
    <property type="protein sequence ID" value="ENSP00000221265.2"/>
    <property type="RefSeq nucleotide sequence ID" value="NM_019088.4"/>
    <property type="RefSeq protein sequence ID" value="NP_061961.2"/>
</dbReference>
<dbReference type="UCSC" id="uc002old.5">
    <molecule id="Q8N7H5-1"/>
    <property type="organism name" value="human"/>
</dbReference>
<dbReference type="AGR" id="HGNC:25459"/>
<dbReference type="CTD" id="54623"/>
<dbReference type="DisGeNET" id="54623"/>
<dbReference type="GeneCards" id="PAF1"/>
<dbReference type="HGNC" id="HGNC:25459">
    <property type="gene designation" value="PAF1"/>
</dbReference>
<dbReference type="HPA" id="ENSG00000006712">
    <property type="expression patterns" value="Low tissue specificity"/>
</dbReference>
<dbReference type="MIM" id="610506">
    <property type="type" value="gene"/>
</dbReference>
<dbReference type="neXtProt" id="NX_Q8N7H5"/>
<dbReference type="OpenTargets" id="ENSG00000006712"/>
<dbReference type="PharmGKB" id="PA142671206"/>
<dbReference type="VEuPathDB" id="HostDB:ENSG00000006712"/>
<dbReference type="eggNOG" id="KOG2478">
    <property type="taxonomic scope" value="Eukaryota"/>
</dbReference>
<dbReference type="GeneTree" id="ENSGT00390000001474"/>
<dbReference type="HOGENOM" id="CLU_021991_2_0_1"/>
<dbReference type="InParanoid" id="Q8N7H5"/>
<dbReference type="OMA" id="LVCRIKY"/>
<dbReference type="OrthoDB" id="10260285at2759"/>
<dbReference type="PAN-GO" id="Q8N7H5">
    <property type="GO annotations" value="3 GO annotations based on evolutionary models"/>
</dbReference>
<dbReference type="PhylomeDB" id="Q8N7H5"/>
<dbReference type="TreeFam" id="TF313642"/>
<dbReference type="PathwayCommons" id="Q8N7H5"/>
<dbReference type="Reactome" id="R-HSA-112382">
    <property type="pathway name" value="Formation of RNA Pol II elongation complex"/>
</dbReference>
<dbReference type="Reactome" id="R-HSA-674695">
    <property type="pathway name" value="RNA Polymerase II Pre-transcription Events"/>
</dbReference>
<dbReference type="Reactome" id="R-HSA-75955">
    <property type="pathway name" value="RNA Polymerase II Transcription Elongation"/>
</dbReference>
<dbReference type="Reactome" id="R-HSA-8866654">
    <property type="pathway name" value="E3 ubiquitin ligases ubiquitinate target proteins"/>
</dbReference>
<dbReference type="SignaLink" id="Q8N7H5"/>
<dbReference type="SIGNOR" id="Q8N7H5"/>
<dbReference type="BioGRID-ORCS" id="54623">
    <property type="hits" value="578 hits in 1173 CRISPR screens"/>
</dbReference>
<dbReference type="CD-CODE" id="8C2F96ED">
    <property type="entry name" value="Centrosome"/>
</dbReference>
<dbReference type="ChiTaRS" id="PAF1">
    <property type="organism name" value="human"/>
</dbReference>
<dbReference type="GenomeRNAi" id="54623"/>
<dbReference type="Pharos" id="Q8N7H5">
    <property type="development level" value="Tbio"/>
</dbReference>
<dbReference type="PRO" id="PR:Q8N7H5"/>
<dbReference type="Proteomes" id="UP000005640">
    <property type="component" value="Chromosome 19"/>
</dbReference>
<dbReference type="RNAct" id="Q8N7H5">
    <property type="molecule type" value="protein"/>
</dbReference>
<dbReference type="Bgee" id="ENSG00000006712">
    <property type="expression patterns" value="Expressed in tendon of biceps brachii and 202 other cell types or tissues"/>
</dbReference>
<dbReference type="ExpressionAtlas" id="Q8N7H5">
    <property type="expression patterns" value="baseline and differential"/>
</dbReference>
<dbReference type="GO" id="GO:0016593">
    <property type="term" value="C:Cdc73/Paf1 complex"/>
    <property type="evidence" value="ECO:0000314"/>
    <property type="project" value="UniProtKB"/>
</dbReference>
<dbReference type="GO" id="GO:0005737">
    <property type="term" value="C:cytoplasm"/>
    <property type="evidence" value="ECO:0000314"/>
    <property type="project" value="CACAO"/>
</dbReference>
<dbReference type="GO" id="GO:0001650">
    <property type="term" value="C:fibrillar center"/>
    <property type="evidence" value="ECO:0000314"/>
    <property type="project" value="HPA"/>
</dbReference>
<dbReference type="GO" id="GO:0043231">
    <property type="term" value="C:intracellular membrane-bounded organelle"/>
    <property type="evidence" value="ECO:0000314"/>
    <property type="project" value="HPA"/>
</dbReference>
<dbReference type="GO" id="GO:0016020">
    <property type="term" value="C:membrane"/>
    <property type="evidence" value="ECO:0000314"/>
    <property type="project" value="CACAO"/>
</dbReference>
<dbReference type="GO" id="GO:0005654">
    <property type="term" value="C:nucleoplasm"/>
    <property type="evidence" value="ECO:0000314"/>
    <property type="project" value="HPA"/>
</dbReference>
<dbReference type="GO" id="GO:0003682">
    <property type="term" value="F:chromatin binding"/>
    <property type="evidence" value="ECO:0000318"/>
    <property type="project" value="GO_Central"/>
</dbReference>
<dbReference type="GO" id="GO:0000993">
    <property type="term" value="F:RNA polymerase II complex binding"/>
    <property type="evidence" value="ECO:0000314"/>
    <property type="project" value="UniProtKB"/>
</dbReference>
<dbReference type="GO" id="GO:0071222">
    <property type="term" value="P:cellular response to lipopolysaccharide"/>
    <property type="evidence" value="ECO:0000250"/>
    <property type="project" value="UniProtKB"/>
</dbReference>
<dbReference type="GO" id="GO:0001711">
    <property type="term" value="P:endodermal cell fate commitment"/>
    <property type="evidence" value="ECO:0000250"/>
    <property type="project" value="UniProtKB"/>
</dbReference>
<dbReference type="GO" id="GO:0031124">
    <property type="term" value="P:mRNA 3'-end processing"/>
    <property type="evidence" value="ECO:0000315"/>
    <property type="project" value="UniProtKB"/>
</dbReference>
<dbReference type="GO" id="GO:0045638">
    <property type="term" value="P:negative regulation of myeloid cell differentiation"/>
    <property type="evidence" value="ECO:0000314"/>
    <property type="project" value="UniProtKB"/>
</dbReference>
<dbReference type="GO" id="GO:0000122">
    <property type="term" value="P:negative regulation of transcription by RNA polymerase II"/>
    <property type="evidence" value="ECO:0000250"/>
    <property type="project" value="UniProtKB"/>
</dbReference>
<dbReference type="GO" id="GO:1902808">
    <property type="term" value="P:positive regulation of cell cycle G1/S phase transition"/>
    <property type="evidence" value="ECO:0000315"/>
    <property type="project" value="UniProtKB"/>
</dbReference>
<dbReference type="GO" id="GO:0045944">
    <property type="term" value="P:positive regulation of transcription by RNA polymerase II"/>
    <property type="evidence" value="ECO:0000314"/>
    <property type="project" value="UniProtKB"/>
</dbReference>
<dbReference type="GO" id="GO:0034504">
    <property type="term" value="P:protein localization to nucleus"/>
    <property type="evidence" value="ECO:0000315"/>
    <property type="project" value="CACAO"/>
</dbReference>
<dbReference type="GO" id="GO:0019827">
    <property type="term" value="P:stem cell population maintenance"/>
    <property type="evidence" value="ECO:0007669"/>
    <property type="project" value="Ensembl"/>
</dbReference>
<dbReference type="GO" id="GO:0006368">
    <property type="term" value="P:transcription elongation by RNA polymerase II"/>
    <property type="evidence" value="ECO:0000314"/>
    <property type="project" value="GO_Central"/>
</dbReference>
<dbReference type="GO" id="GO:0016055">
    <property type="term" value="P:Wnt signaling pathway"/>
    <property type="evidence" value="ECO:0007669"/>
    <property type="project" value="UniProtKB-KW"/>
</dbReference>
<dbReference type="InterPro" id="IPR007133">
    <property type="entry name" value="RNA_pol_II-assoc_Paf1"/>
</dbReference>
<dbReference type="PANTHER" id="PTHR23188">
    <property type="entry name" value="RNA POLYMERASE II-ASSOCIATED FACTOR 1 HOMOLOG"/>
    <property type="match status" value="1"/>
</dbReference>
<dbReference type="PANTHER" id="PTHR23188:SF12">
    <property type="entry name" value="RNA POLYMERASE II-ASSOCIATED FACTOR 1 HOMOLOG"/>
    <property type="match status" value="1"/>
</dbReference>
<dbReference type="Pfam" id="PF03985">
    <property type="entry name" value="Paf1"/>
    <property type="match status" value="1"/>
</dbReference>